<accession>B4S410</accession>
<proteinExistence type="inferred from homology"/>
<keyword id="KW-0963">Cytoplasm</keyword>
<keyword id="KW-0328">Glycosyltransferase</keyword>
<keyword id="KW-0660">Purine salvage</keyword>
<keyword id="KW-0808">Transferase</keyword>
<sequence length="177" mass="19391">MPIKSRIRTIPDYPKKGIMFRDITTLLKDPVGFRLVIDQITQHYLENGINFDMIIGMEARGFIIGGALSYTLGKGFVPIRKPGKLPGETVNQEYQLEYGTDKVEMHIDALEKGTRVLLVDDLLATGGTALAGAALIEKVGGVVADMAFIVNLPDIGGQKKLEEKGYSLFSLTEFEGD</sequence>
<feature type="chain" id="PRO_1000088991" description="Adenine phosphoribosyltransferase">
    <location>
        <begin position="1"/>
        <end position="177"/>
    </location>
</feature>
<gene>
    <name evidence="1" type="primary">apt</name>
    <name type="ordered locus">Paes_1789</name>
</gene>
<protein>
    <recommendedName>
        <fullName evidence="1">Adenine phosphoribosyltransferase</fullName>
        <shortName evidence="1">APRT</shortName>
        <ecNumber evidence="1">2.4.2.7</ecNumber>
    </recommendedName>
</protein>
<name>APT_PROA2</name>
<evidence type="ECO:0000255" key="1">
    <source>
        <dbReference type="HAMAP-Rule" id="MF_00004"/>
    </source>
</evidence>
<comment type="function">
    <text evidence="1">Catalyzes a salvage reaction resulting in the formation of AMP, that is energically less costly than de novo synthesis.</text>
</comment>
<comment type="catalytic activity">
    <reaction evidence="1">
        <text>AMP + diphosphate = 5-phospho-alpha-D-ribose 1-diphosphate + adenine</text>
        <dbReference type="Rhea" id="RHEA:16609"/>
        <dbReference type="ChEBI" id="CHEBI:16708"/>
        <dbReference type="ChEBI" id="CHEBI:33019"/>
        <dbReference type="ChEBI" id="CHEBI:58017"/>
        <dbReference type="ChEBI" id="CHEBI:456215"/>
        <dbReference type="EC" id="2.4.2.7"/>
    </reaction>
</comment>
<comment type="pathway">
    <text evidence="1">Purine metabolism; AMP biosynthesis via salvage pathway; AMP from adenine: step 1/1.</text>
</comment>
<comment type="subunit">
    <text evidence="1">Homodimer.</text>
</comment>
<comment type="subcellular location">
    <subcellularLocation>
        <location evidence="1">Cytoplasm</location>
    </subcellularLocation>
</comment>
<comment type="similarity">
    <text evidence="1">Belongs to the purine/pyrimidine phosphoribosyltransferase family.</text>
</comment>
<dbReference type="EC" id="2.4.2.7" evidence="1"/>
<dbReference type="EMBL" id="CP001108">
    <property type="protein sequence ID" value="ACF46802.1"/>
    <property type="molecule type" value="Genomic_DNA"/>
</dbReference>
<dbReference type="RefSeq" id="WP_012506335.1">
    <property type="nucleotide sequence ID" value="NC_011059.1"/>
</dbReference>
<dbReference type="SMR" id="B4S410"/>
<dbReference type="STRING" id="290512.Paes_1789"/>
<dbReference type="KEGG" id="paa:Paes_1789"/>
<dbReference type="eggNOG" id="COG0503">
    <property type="taxonomic scope" value="Bacteria"/>
</dbReference>
<dbReference type="HOGENOM" id="CLU_063339_3_0_10"/>
<dbReference type="UniPathway" id="UPA00588">
    <property type="reaction ID" value="UER00646"/>
</dbReference>
<dbReference type="Proteomes" id="UP000002725">
    <property type="component" value="Chromosome"/>
</dbReference>
<dbReference type="GO" id="GO:0005737">
    <property type="term" value="C:cytoplasm"/>
    <property type="evidence" value="ECO:0007669"/>
    <property type="project" value="UniProtKB-SubCell"/>
</dbReference>
<dbReference type="GO" id="GO:0002055">
    <property type="term" value="F:adenine binding"/>
    <property type="evidence" value="ECO:0007669"/>
    <property type="project" value="TreeGrafter"/>
</dbReference>
<dbReference type="GO" id="GO:0003999">
    <property type="term" value="F:adenine phosphoribosyltransferase activity"/>
    <property type="evidence" value="ECO:0007669"/>
    <property type="project" value="UniProtKB-UniRule"/>
</dbReference>
<dbReference type="GO" id="GO:0016208">
    <property type="term" value="F:AMP binding"/>
    <property type="evidence" value="ECO:0007669"/>
    <property type="project" value="TreeGrafter"/>
</dbReference>
<dbReference type="GO" id="GO:0006168">
    <property type="term" value="P:adenine salvage"/>
    <property type="evidence" value="ECO:0007669"/>
    <property type="project" value="InterPro"/>
</dbReference>
<dbReference type="GO" id="GO:0044209">
    <property type="term" value="P:AMP salvage"/>
    <property type="evidence" value="ECO:0007669"/>
    <property type="project" value="UniProtKB-UniRule"/>
</dbReference>
<dbReference type="GO" id="GO:0006166">
    <property type="term" value="P:purine ribonucleoside salvage"/>
    <property type="evidence" value="ECO:0007669"/>
    <property type="project" value="UniProtKB-KW"/>
</dbReference>
<dbReference type="CDD" id="cd06223">
    <property type="entry name" value="PRTases_typeI"/>
    <property type="match status" value="1"/>
</dbReference>
<dbReference type="FunFam" id="3.40.50.2020:FF:000021">
    <property type="entry name" value="Adenine phosphoribosyltransferase"/>
    <property type="match status" value="1"/>
</dbReference>
<dbReference type="Gene3D" id="3.40.50.2020">
    <property type="match status" value="1"/>
</dbReference>
<dbReference type="HAMAP" id="MF_00004">
    <property type="entry name" value="Aden_phosphoribosyltr"/>
    <property type="match status" value="1"/>
</dbReference>
<dbReference type="InterPro" id="IPR005764">
    <property type="entry name" value="Ade_phspho_trans"/>
</dbReference>
<dbReference type="InterPro" id="IPR000836">
    <property type="entry name" value="PRibTrfase_dom"/>
</dbReference>
<dbReference type="InterPro" id="IPR029057">
    <property type="entry name" value="PRTase-like"/>
</dbReference>
<dbReference type="InterPro" id="IPR050054">
    <property type="entry name" value="UPRTase/APRTase"/>
</dbReference>
<dbReference type="NCBIfam" id="TIGR01090">
    <property type="entry name" value="apt"/>
    <property type="match status" value="1"/>
</dbReference>
<dbReference type="NCBIfam" id="NF002634">
    <property type="entry name" value="PRK02304.1-3"/>
    <property type="match status" value="1"/>
</dbReference>
<dbReference type="NCBIfam" id="NF002636">
    <property type="entry name" value="PRK02304.1-5"/>
    <property type="match status" value="1"/>
</dbReference>
<dbReference type="PANTHER" id="PTHR32315">
    <property type="entry name" value="ADENINE PHOSPHORIBOSYLTRANSFERASE"/>
    <property type="match status" value="1"/>
</dbReference>
<dbReference type="PANTHER" id="PTHR32315:SF3">
    <property type="entry name" value="ADENINE PHOSPHORIBOSYLTRANSFERASE"/>
    <property type="match status" value="1"/>
</dbReference>
<dbReference type="Pfam" id="PF00156">
    <property type="entry name" value="Pribosyltran"/>
    <property type="match status" value="1"/>
</dbReference>
<dbReference type="SUPFAM" id="SSF53271">
    <property type="entry name" value="PRTase-like"/>
    <property type="match status" value="1"/>
</dbReference>
<dbReference type="PROSITE" id="PS00103">
    <property type="entry name" value="PUR_PYR_PR_TRANSFER"/>
    <property type="match status" value="1"/>
</dbReference>
<reference key="1">
    <citation type="submission" date="2008-06" db="EMBL/GenBank/DDBJ databases">
        <title>Complete sequence of chromosome of Prosthecochloris aestuarii DSM 271.</title>
        <authorList>
            <consortium name="US DOE Joint Genome Institute"/>
            <person name="Lucas S."/>
            <person name="Copeland A."/>
            <person name="Lapidus A."/>
            <person name="Glavina del Rio T."/>
            <person name="Dalin E."/>
            <person name="Tice H."/>
            <person name="Bruce D."/>
            <person name="Goodwin L."/>
            <person name="Pitluck S."/>
            <person name="Schmutz J."/>
            <person name="Larimer F."/>
            <person name="Land M."/>
            <person name="Hauser L."/>
            <person name="Kyrpides N."/>
            <person name="Anderson I."/>
            <person name="Liu Z."/>
            <person name="Li T."/>
            <person name="Zhao F."/>
            <person name="Overmann J."/>
            <person name="Bryant D.A."/>
            <person name="Richardson P."/>
        </authorList>
    </citation>
    <scope>NUCLEOTIDE SEQUENCE [LARGE SCALE GENOMIC DNA]</scope>
    <source>
        <strain>DSM 271 / SK 413</strain>
    </source>
</reference>
<organism>
    <name type="scientific">Prosthecochloris aestuarii (strain DSM 271 / SK 413)</name>
    <dbReference type="NCBI Taxonomy" id="290512"/>
    <lineage>
        <taxon>Bacteria</taxon>
        <taxon>Pseudomonadati</taxon>
        <taxon>Chlorobiota</taxon>
        <taxon>Chlorobiia</taxon>
        <taxon>Chlorobiales</taxon>
        <taxon>Chlorobiaceae</taxon>
        <taxon>Prosthecochloris</taxon>
    </lineage>
</organism>